<comment type="function">
    <text evidence="1">Endonuclease that specifically degrades the RNA of RNA-DNA hybrids.</text>
</comment>
<comment type="catalytic activity">
    <reaction evidence="1">
        <text>Endonucleolytic cleavage to 5'-phosphomonoester.</text>
        <dbReference type="EC" id="3.1.26.4"/>
    </reaction>
</comment>
<comment type="cofactor">
    <cofactor evidence="1">
        <name>Mg(2+)</name>
        <dbReference type="ChEBI" id="CHEBI:18420"/>
    </cofactor>
    <text evidence="1">Binds 1 Mg(2+) ion per subunit. May bind a second metal ion at a regulatory site, or after substrate binding.</text>
</comment>
<comment type="subunit">
    <text evidence="1">Monomer.</text>
</comment>
<comment type="subcellular location">
    <subcellularLocation>
        <location evidence="1">Cytoplasm</location>
    </subcellularLocation>
</comment>
<comment type="similarity">
    <text evidence="1">Belongs to the RNase H family.</text>
</comment>
<gene>
    <name evidence="1" type="primary">rnhA</name>
    <name type="ordered locus">SeSA_A0293</name>
</gene>
<sequence length="155" mass="17510">MLKQVEIFTDGSCLGNPGPGGYGAILRYRGHEKTFSEGYTLTTNNRMELMAAIVALEALKEHCEVTLSTDSQYVRQGITQWIHNWKKRGWKTAEKKPVKNVDLWKRLDAALGQHQIKWVWVKGHAGHPENERCDELARAAAMNPTQEDSGYQAEA</sequence>
<feature type="chain" id="PRO_1000090918" description="Ribonuclease H">
    <location>
        <begin position="1"/>
        <end position="155"/>
    </location>
</feature>
<feature type="domain" description="RNase H type-1" evidence="2">
    <location>
        <begin position="1"/>
        <end position="142"/>
    </location>
</feature>
<feature type="binding site" evidence="1">
    <location>
        <position position="10"/>
    </location>
    <ligand>
        <name>Mg(2+)</name>
        <dbReference type="ChEBI" id="CHEBI:18420"/>
        <label>1</label>
    </ligand>
</feature>
<feature type="binding site" evidence="1">
    <location>
        <position position="10"/>
    </location>
    <ligand>
        <name>Mg(2+)</name>
        <dbReference type="ChEBI" id="CHEBI:18420"/>
        <label>2</label>
    </ligand>
</feature>
<feature type="binding site" evidence="1">
    <location>
        <position position="48"/>
    </location>
    <ligand>
        <name>Mg(2+)</name>
        <dbReference type="ChEBI" id="CHEBI:18420"/>
        <label>1</label>
    </ligand>
</feature>
<feature type="binding site" evidence="1">
    <location>
        <position position="70"/>
    </location>
    <ligand>
        <name>Mg(2+)</name>
        <dbReference type="ChEBI" id="CHEBI:18420"/>
        <label>1</label>
    </ligand>
</feature>
<feature type="binding site" evidence="1">
    <location>
        <position position="134"/>
    </location>
    <ligand>
        <name>Mg(2+)</name>
        <dbReference type="ChEBI" id="CHEBI:18420"/>
        <label>2</label>
    </ligand>
</feature>
<reference key="1">
    <citation type="journal article" date="2011" name="J. Bacteriol.">
        <title>Comparative genomics of 28 Salmonella enterica isolates: evidence for CRISPR-mediated adaptive sublineage evolution.</title>
        <authorList>
            <person name="Fricke W.F."/>
            <person name="Mammel M.K."/>
            <person name="McDermott P.F."/>
            <person name="Tartera C."/>
            <person name="White D.G."/>
            <person name="Leclerc J.E."/>
            <person name="Ravel J."/>
            <person name="Cebula T.A."/>
        </authorList>
    </citation>
    <scope>NUCLEOTIDE SEQUENCE [LARGE SCALE GENOMIC DNA]</scope>
    <source>
        <strain>CVM19633</strain>
    </source>
</reference>
<keyword id="KW-0963">Cytoplasm</keyword>
<keyword id="KW-0255">Endonuclease</keyword>
<keyword id="KW-0378">Hydrolase</keyword>
<keyword id="KW-0460">Magnesium</keyword>
<keyword id="KW-0479">Metal-binding</keyword>
<keyword id="KW-0540">Nuclease</keyword>
<protein>
    <recommendedName>
        <fullName evidence="1">Ribonuclease H</fullName>
        <shortName evidence="1">RNase H</shortName>
        <ecNumber evidence="1">3.1.26.4</ecNumber>
    </recommendedName>
</protein>
<accession>B4TYH0</accession>
<proteinExistence type="inferred from homology"/>
<dbReference type="EC" id="3.1.26.4" evidence="1"/>
<dbReference type="EMBL" id="CP001127">
    <property type="protein sequence ID" value="ACF91490.1"/>
    <property type="molecule type" value="Genomic_DNA"/>
</dbReference>
<dbReference type="RefSeq" id="WP_000917872.1">
    <property type="nucleotide sequence ID" value="NC_011094.1"/>
</dbReference>
<dbReference type="SMR" id="B4TYH0"/>
<dbReference type="KEGG" id="sew:SeSA_A0293"/>
<dbReference type="HOGENOM" id="CLU_030894_6_0_6"/>
<dbReference type="Proteomes" id="UP000001865">
    <property type="component" value="Chromosome"/>
</dbReference>
<dbReference type="GO" id="GO:0005737">
    <property type="term" value="C:cytoplasm"/>
    <property type="evidence" value="ECO:0007669"/>
    <property type="project" value="UniProtKB-SubCell"/>
</dbReference>
<dbReference type="GO" id="GO:0000287">
    <property type="term" value="F:magnesium ion binding"/>
    <property type="evidence" value="ECO:0007669"/>
    <property type="project" value="UniProtKB-UniRule"/>
</dbReference>
<dbReference type="GO" id="GO:0003676">
    <property type="term" value="F:nucleic acid binding"/>
    <property type="evidence" value="ECO:0007669"/>
    <property type="project" value="InterPro"/>
</dbReference>
<dbReference type="GO" id="GO:0004523">
    <property type="term" value="F:RNA-DNA hybrid ribonuclease activity"/>
    <property type="evidence" value="ECO:0007669"/>
    <property type="project" value="UniProtKB-UniRule"/>
</dbReference>
<dbReference type="GO" id="GO:0043137">
    <property type="term" value="P:DNA replication, removal of RNA primer"/>
    <property type="evidence" value="ECO:0007669"/>
    <property type="project" value="TreeGrafter"/>
</dbReference>
<dbReference type="CDD" id="cd09278">
    <property type="entry name" value="RNase_HI_prokaryote_like"/>
    <property type="match status" value="1"/>
</dbReference>
<dbReference type="FunFam" id="3.30.420.10:FF:000008">
    <property type="entry name" value="Ribonuclease H"/>
    <property type="match status" value="1"/>
</dbReference>
<dbReference type="Gene3D" id="3.30.420.10">
    <property type="entry name" value="Ribonuclease H-like superfamily/Ribonuclease H"/>
    <property type="match status" value="1"/>
</dbReference>
<dbReference type="HAMAP" id="MF_00042">
    <property type="entry name" value="RNase_H"/>
    <property type="match status" value="1"/>
</dbReference>
<dbReference type="InterPro" id="IPR050092">
    <property type="entry name" value="RNase_H"/>
</dbReference>
<dbReference type="InterPro" id="IPR012337">
    <property type="entry name" value="RNaseH-like_sf"/>
</dbReference>
<dbReference type="InterPro" id="IPR002156">
    <property type="entry name" value="RNaseH_domain"/>
</dbReference>
<dbReference type="InterPro" id="IPR036397">
    <property type="entry name" value="RNaseH_sf"/>
</dbReference>
<dbReference type="InterPro" id="IPR022892">
    <property type="entry name" value="RNaseHI"/>
</dbReference>
<dbReference type="NCBIfam" id="NF001236">
    <property type="entry name" value="PRK00203.1"/>
    <property type="match status" value="1"/>
</dbReference>
<dbReference type="PANTHER" id="PTHR10642">
    <property type="entry name" value="RIBONUCLEASE H1"/>
    <property type="match status" value="1"/>
</dbReference>
<dbReference type="PANTHER" id="PTHR10642:SF26">
    <property type="entry name" value="RIBONUCLEASE H1"/>
    <property type="match status" value="1"/>
</dbReference>
<dbReference type="Pfam" id="PF00075">
    <property type="entry name" value="RNase_H"/>
    <property type="match status" value="1"/>
</dbReference>
<dbReference type="SUPFAM" id="SSF53098">
    <property type="entry name" value="Ribonuclease H-like"/>
    <property type="match status" value="1"/>
</dbReference>
<dbReference type="PROSITE" id="PS50879">
    <property type="entry name" value="RNASE_H_1"/>
    <property type="match status" value="1"/>
</dbReference>
<evidence type="ECO:0000255" key="1">
    <source>
        <dbReference type="HAMAP-Rule" id="MF_00042"/>
    </source>
</evidence>
<evidence type="ECO:0000255" key="2">
    <source>
        <dbReference type="PROSITE-ProRule" id="PRU00408"/>
    </source>
</evidence>
<organism>
    <name type="scientific">Salmonella schwarzengrund (strain CVM19633)</name>
    <dbReference type="NCBI Taxonomy" id="439843"/>
    <lineage>
        <taxon>Bacteria</taxon>
        <taxon>Pseudomonadati</taxon>
        <taxon>Pseudomonadota</taxon>
        <taxon>Gammaproteobacteria</taxon>
        <taxon>Enterobacterales</taxon>
        <taxon>Enterobacteriaceae</taxon>
        <taxon>Salmonella</taxon>
    </lineage>
</organism>
<name>RNH_SALSV</name>